<organism>
    <name type="scientific">Bacillus subtilis (strain 168)</name>
    <dbReference type="NCBI Taxonomy" id="224308"/>
    <lineage>
        <taxon>Bacteria</taxon>
        <taxon>Bacillati</taxon>
        <taxon>Bacillota</taxon>
        <taxon>Bacilli</taxon>
        <taxon>Bacillales</taxon>
        <taxon>Bacillaceae</taxon>
        <taxon>Bacillus</taxon>
    </lineage>
</organism>
<feature type="chain" id="PRO_0000049451" description="Uncharacterized protein YacP">
    <location>
        <begin position="1"/>
        <end position="170"/>
    </location>
</feature>
<feature type="strand" evidence="1">
    <location>
        <begin position="3"/>
        <end position="7"/>
    </location>
</feature>
<feature type="helix" evidence="1">
    <location>
        <begin position="8"/>
        <end position="14"/>
    </location>
</feature>
<feature type="helix" evidence="1">
    <location>
        <begin position="16"/>
        <end position="19"/>
    </location>
</feature>
<feature type="helix" evidence="1">
    <location>
        <begin position="23"/>
        <end position="44"/>
    </location>
</feature>
<feature type="strand" evidence="1">
    <location>
        <begin position="47"/>
        <end position="52"/>
    </location>
</feature>
<feature type="turn" evidence="1">
    <location>
        <begin position="54"/>
        <end position="56"/>
    </location>
</feature>
<feature type="strand" evidence="1">
    <location>
        <begin position="70"/>
        <end position="73"/>
    </location>
</feature>
<feature type="helix" evidence="1">
    <location>
        <begin position="80"/>
        <end position="90"/>
    </location>
</feature>
<feature type="strand" evidence="1">
    <location>
        <begin position="98"/>
        <end position="101"/>
    </location>
</feature>
<feature type="helix" evidence="2">
    <location>
        <begin position="105"/>
        <end position="108"/>
    </location>
</feature>
<feature type="helix" evidence="1">
    <location>
        <begin position="110"/>
        <end position="113"/>
    </location>
</feature>
<feature type="strand" evidence="1">
    <location>
        <begin position="117"/>
        <end position="119"/>
    </location>
</feature>
<feature type="helix" evidence="1">
    <location>
        <begin position="121"/>
        <end position="145"/>
    </location>
</feature>
<feature type="helix" evidence="1">
    <location>
        <begin position="147"/>
        <end position="150"/>
    </location>
</feature>
<feature type="helix" evidence="1">
    <location>
        <begin position="151"/>
        <end position="165"/>
    </location>
</feature>
<feature type="turn" evidence="1">
    <location>
        <begin position="166"/>
        <end position="170"/>
    </location>
</feature>
<sequence>MDILLVDGYNMIGAWPQLKDLKANSFEEARDVLIQKMAEYQSYTGNRVIVVFDAHLVKGLEKKQTNHRVEVIFTKENETADERIEKLAQALNNIATQIHVATSDYTEQWAIFGQGALRKSARELLREVETIERRIERRVRKITSEKPAGKIALSEEVLKTFEKWRRGDLD</sequence>
<evidence type="ECO:0007829" key="1">
    <source>
        <dbReference type="PDB" id="5MQ8"/>
    </source>
</evidence>
<evidence type="ECO:0007829" key="2">
    <source>
        <dbReference type="PDB" id="5MQ9"/>
    </source>
</evidence>
<dbReference type="EMBL" id="D26185">
    <property type="protein sequence ID" value="BAA05330.1"/>
    <property type="molecule type" value="Genomic_DNA"/>
</dbReference>
<dbReference type="EMBL" id="AL009126">
    <property type="protein sequence ID" value="CAB11873.1"/>
    <property type="molecule type" value="Genomic_DNA"/>
</dbReference>
<dbReference type="PIR" id="S66125">
    <property type="entry name" value="S66125"/>
</dbReference>
<dbReference type="PDB" id="5MQ8">
    <property type="method" value="X-ray"/>
    <property type="resolution" value="2.25 A"/>
    <property type="chains" value="A/D=1-170"/>
</dbReference>
<dbReference type="PDB" id="5MQ9">
    <property type="method" value="X-ray"/>
    <property type="resolution" value="3.17 A"/>
    <property type="chains" value="A/B=1-170"/>
</dbReference>
<dbReference type="PDBsum" id="5MQ8"/>
<dbReference type="PDBsum" id="5MQ9"/>
<dbReference type="SMR" id="P37574"/>
<dbReference type="FunCoup" id="P37574">
    <property type="interactions" value="29"/>
</dbReference>
<dbReference type="STRING" id="224308.BSU00970"/>
<dbReference type="PaxDb" id="224308-BSU00970"/>
<dbReference type="EnsemblBacteria" id="CAB11873">
    <property type="protein sequence ID" value="CAB11873"/>
    <property type="gene ID" value="BSU_00970"/>
</dbReference>
<dbReference type="GeneID" id="936993"/>
<dbReference type="KEGG" id="bsu:BSU00970"/>
<dbReference type="PATRIC" id="fig|224308.179.peg.100"/>
<dbReference type="eggNOG" id="COG3688">
    <property type="taxonomic scope" value="Bacteria"/>
</dbReference>
<dbReference type="InParanoid" id="P37574"/>
<dbReference type="OrthoDB" id="9792160at2"/>
<dbReference type="PhylomeDB" id="P37574"/>
<dbReference type="BioCyc" id="BSUB:BSU00970-MONOMER"/>
<dbReference type="Proteomes" id="UP000001570">
    <property type="component" value="Chromosome"/>
</dbReference>
<dbReference type="CDD" id="cd10912">
    <property type="entry name" value="PIN_YacP-like"/>
    <property type="match status" value="1"/>
</dbReference>
<dbReference type="InterPro" id="IPR010298">
    <property type="entry name" value="YacP-like"/>
</dbReference>
<dbReference type="PANTHER" id="PTHR34547">
    <property type="entry name" value="YACP-LIKE NYN DOMAIN PROTEIN"/>
    <property type="match status" value="1"/>
</dbReference>
<dbReference type="PANTHER" id="PTHR34547:SF1">
    <property type="entry name" value="YACP-LIKE NYN DOMAIN PROTEIN"/>
    <property type="match status" value="1"/>
</dbReference>
<dbReference type="Pfam" id="PF05991">
    <property type="entry name" value="NYN_YacP"/>
    <property type="match status" value="1"/>
</dbReference>
<name>YACP_BACSU</name>
<accession>P37574</accession>
<reference key="1">
    <citation type="journal article" date="1994" name="DNA Res.">
        <title>Systematic sequencing of the 180 kilobase region of the Bacillus subtilis chromosome containing the replication origin.</title>
        <authorList>
            <person name="Ogasawara N."/>
            <person name="Nakai S."/>
            <person name="Yoshikawa H."/>
        </authorList>
    </citation>
    <scope>NUCLEOTIDE SEQUENCE [GENOMIC DNA]</scope>
    <source>
        <strain>168</strain>
    </source>
</reference>
<reference key="2">
    <citation type="journal article" date="1997" name="Nature">
        <title>The complete genome sequence of the Gram-positive bacterium Bacillus subtilis.</title>
        <authorList>
            <person name="Kunst F."/>
            <person name="Ogasawara N."/>
            <person name="Moszer I."/>
            <person name="Albertini A.M."/>
            <person name="Alloni G."/>
            <person name="Azevedo V."/>
            <person name="Bertero M.G."/>
            <person name="Bessieres P."/>
            <person name="Bolotin A."/>
            <person name="Borchert S."/>
            <person name="Borriss R."/>
            <person name="Boursier L."/>
            <person name="Brans A."/>
            <person name="Braun M."/>
            <person name="Brignell S.C."/>
            <person name="Bron S."/>
            <person name="Brouillet S."/>
            <person name="Bruschi C.V."/>
            <person name="Caldwell B."/>
            <person name="Capuano V."/>
            <person name="Carter N.M."/>
            <person name="Choi S.-K."/>
            <person name="Codani J.-J."/>
            <person name="Connerton I.F."/>
            <person name="Cummings N.J."/>
            <person name="Daniel R.A."/>
            <person name="Denizot F."/>
            <person name="Devine K.M."/>
            <person name="Duesterhoeft A."/>
            <person name="Ehrlich S.D."/>
            <person name="Emmerson P.T."/>
            <person name="Entian K.-D."/>
            <person name="Errington J."/>
            <person name="Fabret C."/>
            <person name="Ferrari E."/>
            <person name="Foulger D."/>
            <person name="Fritz C."/>
            <person name="Fujita M."/>
            <person name="Fujita Y."/>
            <person name="Fuma S."/>
            <person name="Galizzi A."/>
            <person name="Galleron N."/>
            <person name="Ghim S.-Y."/>
            <person name="Glaser P."/>
            <person name="Goffeau A."/>
            <person name="Golightly E.J."/>
            <person name="Grandi G."/>
            <person name="Guiseppi G."/>
            <person name="Guy B.J."/>
            <person name="Haga K."/>
            <person name="Haiech J."/>
            <person name="Harwood C.R."/>
            <person name="Henaut A."/>
            <person name="Hilbert H."/>
            <person name="Holsappel S."/>
            <person name="Hosono S."/>
            <person name="Hullo M.-F."/>
            <person name="Itaya M."/>
            <person name="Jones L.-M."/>
            <person name="Joris B."/>
            <person name="Karamata D."/>
            <person name="Kasahara Y."/>
            <person name="Klaerr-Blanchard M."/>
            <person name="Klein C."/>
            <person name="Kobayashi Y."/>
            <person name="Koetter P."/>
            <person name="Koningstein G."/>
            <person name="Krogh S."/>
            <person name="Kumano M."/>
            <person name="Kurita K."/>
            <person name="Lapidus A."/>
            <person name="Lardinois S."/>
            <person name="Lauber J."/>
            <person name="Lazarevic V."/>
            <person name="Lee S.-M."/>
            <person name="Levine A."/>
            <person name="Liu H."/>
            <person name="Masuda S."/>
            <person name="Mauel C."/>
            <person name="Medigue C."/>
            <person name="Medina N."/>
            <person name="Mellado R.P."/>
            <person name="Mizuno M."/>
            <person name="Moestl D."/>
            <person name="Nakai S."/>
            <person name="Noback M."/>
            <person name="Noone D."/>
            <person name="O'Reilly M."/>
            <person name="Ogawa K."/>
            <person name="Ogiwara A."/>
            <person name="Oudega B."/>
            <person name="Park S.-H."/>
            <person name="Parro V."/>
            <person name="Pohl T.M."/>
            <person name="Portetelle D."/>
            <person name="Porwollik S."/>
            <person name="Prescott A.M."/>
            <person name="Presecan E."/>
            <person name="Pujic P."/>
            <person name="Purnelle B."/>
            <person name="Rapoport G."/>
            <person name="Rey M."/>
            <person name="Reynolds S."/>
            <person name="Rieger M."/>
            <person name="Rivolta C."/>
            <person name="Rocha E."/>
            <person name="Roche B."/>
            <person name="Rose M."/>
            <person name="Sadaie Y."/>
            <person name="Sato T."/>
            <person name="Scanlan E."/>
            <person name="Schleich S."/>
            <person name="Schroeter R."/>
            <person name="Scoffone F."/>
            <person name="Sekiguchi J."/>
            <person name="Sekowska A."/>
            <person name="Seror S.J."/>
            <person name="Serror P."/>
            <person name="Shin B.-S."/>
            <person name="Soldo B."/>
            <person name="Sorokin A."/>
            <person name="Tacconi E."/>
            <person name="Takagi T."/>
            <person name="Takahashi H."/>
            <person name="Takemaru K."/>
            <person name="Takeuchi M."/>
            <person name="Tamakoshi A."/>
            <person name="Tanaka T."/>
            <person name="Terpstra P."/>
            <person name="Tognoni A."/>
            <person name="Tosato V."/>
            <person name="Uchiyama S."/>
            <person name="Vandenbol M."/>
            <person name="Vannier F."/>
            <person name="Vassarotti A."/>
            <person name="Viari A."/>
            <person name="Wambutt R."/>
            <person name="Wedler E."/>
            <person name="Wedler H."/>
            <person name="Weitzenegger T."/>
            <person name="Winters P."/>
            <person name="Wipat A."/>
            <person name="Yamamoto H."/>
            <person name="Yamane K."/>
            <person name="Yasumoto K."/>
            <person name="Yata K."/>
            <person name="Yoshida K."/>
            <person name="Yoshikawa H.-F."/>
            <person name="Zumstein E."/>
            <person name="Yoshikawa H."/>
            <person name="Danchin A."/>
        </authorList>
    </citation>
    <scope>NUCLEOTIDE SEQUENCE [LARGE SCALE GENOMIC DNA]</scope>
    <source>
        <strain>168</strain>
    </source>
</reference>
<proteinExistence type="evidence at protein level"/>
<gene>
    <name type="primary">yacP</name>
    <name type="ordered locus">BSU00970</name>
</gene>
<protein>
    <recommendedName>
        <fullName>Uncharacterized protein YacP</fullName>
    </recommendedName>
</protein>
<keyword id="KW-0002">3D-structure</keyword>
<keyword id="KW-1185">Reference proteome</keyword>